<reference key="1">
    <citation type="submission" date="2007-04" db="EMBL/GenBank/DDBJ databases">
        <title>Complete sequence of chromosome of Mycobacterium gilvum PYR-GCK.</title>
        <authorList>
            <consortium name="US DOE Joint Genome Institute"/>
            <person name="Copeland A."/>
            <person name="Lucas S."/>
            <person name="Lapidus A."/>
            <person name="Barry K."/>
            <person name="Detter J.C."/>
            <person name="Glavina del Rio T."/>
            <person name="Hammon N."/>
            <person name="Israni S."/>
            <person name="Dalin E."/>
            <person name="Tice H."/>
            <person name="Pitluck S."/>
            <person name="Chain P."/>
            <person name="Malfatti S."/>
            <person name="Shin M."/>
            <person name="Vergez L."/>
            <person name="Schmutz J."/>
            <person name="Larimer F."/>
            <person name="Land M."/>
            <person name="Hauser L."/>
            <person name="Kyrpides N."/>
            <person name="Mikhailova N."/>
            <person name="Miller C."/>
            <person name="Richardson P."/>
        </authorList>
    </citation>
    <scope>NUCLEOTIDE SEQUENCE [LARGE SCALE GENOMIC DNA]</scope>
    <source>
        <strain>PYR-GCK</strain>
    </source>
</reference>
<dbReference type="EC" id="6.3.2.8" evidence="1"/>
<dbReference type="EMBL" id="CP000656">
    <property type="protein sequence ID" value="ABP45466.1"/>
    <property type="molecule type" value="Genomic_DNA"/>
</dbReference>
<dbReference type="SMR" id="A4TBE7"/>
<dbReference type="STRING" id="350054.Mflv_2989"/>
<dbReference type="KEGG" id="mgi:Mflv_2989"/>
<dbReference type="eggNOG" id="COG0773">
    <property type="taxonomic scope" value="Bacteria"/>
</dbReference>
<dbReference type="HOGENOM" id="CLU_028104_2_2_11"/>
<dbReference type="OrthoDB" id="9804126at2"/>
<dbReference type="UniPathway" id="UPA00219"/>
<dbReference type="GO" id="GO:0005737">
    <property type="term" value="C:cytoplasm"/>
    <property type="evidence" value="ECO:0007669"/>
    <property type="project" value="UniProtKB-SubCell"/>
</dbReference>
<dbReference type="GO" id="GO:0005524">
    <property type="term" value="F:ATP binding"/>
    <property type="evidence" value="ECO:0007669"/>
    <property type="project" value="UniProtKB-UniRule"/>
</dbReference>
<dbReference type="GO" id="GO:0008763">
    <property type="term" value="F:UDP-N-acetylmuramate-L-alanine ligase activity"/>
    <property type="evidence" value="ECO:0007669"/>
    <property type="project" value="UniProtKB-UniRule"/>
</dbReference>
<dbReference type="GO" id="GO:0051301">
    <property type="term" value="P:cell division"/>
    <property type="evidence" value="ECO:0007669"/>
    <property type="project" value="UniProtKB-KW"/>
</dbReference>
<dbReference type="GO" id="GO:0071555">
    <property type="term" value="P:cell wall organization"/>
    <property type="evidence" value="ECO:0007669"/>
    <property type="project" value="UniProtKB-KW"/>
</dbReference>
<dbReference type="GO" id="GO:0009252">
    <property type="term" value="P:peptidoglycan biosynthetic process"/>
    <property type="evidence" value="ECO:0007669"/>
    <property type="project" value="UniProtKB-UniRule"/>
</dbReference>
<dbReference type="GO" id="GO:0008360">
    <property type="term" value="P:regulation of cell shape"/>
    <property type="evidence" value="ECO:0007669"/>
    <property type="project" value="UniProtKB-KW"/>
</dbReference>
<dbReference type="FunFam" id="3.40.50.720:FF:000046">
    <property type="entry name" value="UDP-N-acetylmuramate--L-alanine ligase"/>
    <property type="match status" value="1"/>
</dbReference>
<dbReference type="Gene3D" id="3.90.190.20">
    <property type="entry name" value="Mur ligase, C-terminal domain"/>
    <property type="match status" value="1"/>
</dbReference>
<dbReference type="Gene3D" id="3.40.1190.10">
    <property type="entry name" value="Mur-like, catalytic domain"/>
    <property type="match status" value="1"/>
</dbReference>
<dbReference type="Gene3D" id="3.40.50.720">
    <property type="entry name" value="NAD(P)-binding Rossmann-like Domain"/>
    <property type="match status" value="1"/>
</dbReference>
<dbReference type="HAMAP" id="MF_00046">
    <property type="entry name" value="MurC"/>
    <property type="match status" value="1"/>
</dbReference>
<dbReference type="InterPro" id="IPR036565">
    <property type="entry name" value="Mur-like_cat_sf"/>
</dbReference>
<dbReference type="InterPro" id="IPR004101">
    <property type="entry name" value="Mur_ligase_C"/>
</dbReference>
<dbReference type="InterPro" id="IPR036615">
    <property type="entry name" value="Mur_ligase_C_dom_sf"/>
</dbReference>
<dbReference type="InterPro" id="IPR013221">
    <property type="entry name" value="Mur_ligase_cen"/>
</dbReference>
<dbReference type="InterPro" id="IPR000713">
    <property type="entry name" value="Mur_ligase_N"/>
</dbReference>
<dbReference type="InterPro" id="IPR050061">
    <property type="entry name" value="MurCDEF_pg_biosynth"/>
</dbReference>
<dbReference type="InterPro" id="IPR005758">
    <property type="entry name" value="UDP-N-AcMur_Ala_ligase_MurC"/>
</dbReference>
<dbReference type="NCBIfam" id="TIGR01082">
    <property type="entry name" value="murC"/>
    <property type="match status" value="1"/>
</dbReference>
<dbReference type="PANTHER" id="PTHR43445:SF3">
    <property type="entry name" value="UDP-N-ACETYLMURAMATE--L-ALANINE LIGASE"/>
    <property type="match status" value="1"/>
</dbReference>
<dbReference type="PANTHER" id="PTHR43445">
    <property type="entry name" value="UDP-N-ACETYLMURAMATE--L-ALANINE LIGASE-RELATED"/>
    <property type="match status" value="1"/>
</dbReference>
<dbReference type="Pfam" id="PF01225">
    <property type="entry name" value="Mur_ligase"/>
    <property type="match status" value="1"/>
</dbReference>
<dbReference type="Pfam" id="PF02875">
    <property type="entry name" value="Mur_ligase_C"/>
    <property type="match status" value="1"/>
</dbReference>
<dbReference type="Pfam" id="PF08245">
    <property type="entry name" value="Mur_ligase_M"/>
    <property type="match status" value="1"/>
</dbReference>
<dbReference type="SUPFAM" id="SSF51984">
    <property type="entry name" value="MurCD N-terminal domain"/>
    <property type="match status" value="1"/>
</dbReference>
<dbReference type="SUPFAM" id="SSF53623">
    <property type="entry name" value="MurD-like peptide ligases, catalytic domain"/>
    <property type="match status" value="1"/>
</dbReference>
<dbReference type="SUPFAM" id="SSF53244">
    <property type="entry name" value="MurD-like peptide ligases, peptide-binding domain"/>
    <property type="match status" value="1"/>
</dbReference>
<feature type="chain" id="PRO_0000336844" description="UDP-N-acetylmuramate--L-alanine ligase">
    <location>
        <begin position="1"/>
        <end position="475"/>
    </location>
</feature>
<feature type="binding site" evidence="1">
    <location>
        <begin position="125"/>
        <end position="131"/>
    </location>
    <ligand>
        <name>ATP</name>
        <dbReference type="ChEBI" id="CHEBI:30616"/>
    </ligand>
</feature>
<sequence length="475" mass="49166">MTGQQPASLPPELARVHMVGIGGAGMSGVARILLDRGGQVSGSDAKDSRGLIALRARGAQVRIGHDPSALDMLPGGPTAVVTTHAAIPKTNPELVEARRRGIPVILRPAVLARLMDDRTSLLVTGTHGKTSTTSMIIVALQHCGFDPSFAVGGDLGQAGTNAHHGSGSTFVAEADESDGSLLEYSPDVAVVTNIEADHLDFYGTVENYTAVFDQFVDRIKPVGALVVCVDDPGAAALAERTAALGIRVLRYGSAPGLDATLLDWSQLGTGAVAEISVRAEDRPRTMRLSVPGRHMALNALGALLAATQAGADIDAVLDGLAGFDGVRRRFELVGTAGGVRVFDDYAHHPTEVRAAITALRAVAEQTPGARTVAVFQPHLYSRTETFATEFAASLSTADEVFVLDVYAAREQPLPGVSGATIADGVSAPVTYIADFSAVAARVAAVVSAGDVVVTMGAGDVTMLGQEILAEVRARA</sequence>
<keyword id="KW-0067">ATP-binding</keyword>
<keyword id="KW-0131">Cell cycle</keyword>
<keyword id="KW-0132">Cell division</keyword>
<keyword id="KW-0133">Cell shape</keyword>
<keyword id="KW-0961">Cell wall biogenesis/degradation</keyword>
<keyword id="KW-0963">Cytoplasm</keyword>
<keyword id="KW-0436">Ligase</keyword>
<keyword id="KW-0547">Nucleotide-binding</keyword>
<keyword id="KW-0573">Peptidoglycan synthesis</keyword>
<accession>A4TBE7</accession>
<evidence type="ECO:0000255" key="1">
    <source>
        <dbReference type="HAMAP-Rule" id="MF_00046"/>
    </source>
</evidence>
<name>MURC_MYCGI</name>
<organism>
    <name type="scientific">Mycolicibacterium gilvum (strain PYR-GCK)</name>
    <name type="common">Mycobacterium gilvum (strain PYR-GCK)</name>
    <dbReference type="NCBI Taxonomy" id="350054"/>
    <lineage>
        <taxon>Bacteria</taxon>
        <taxon>Bacillati</taxon>
        <taxon>Actinomycetota</taxon>
        <taxon>Actinomycetes</taxon>
        <taxon>Mycobacteriales</taxon>
        <taxon>Mycobacteriaceae</taxon>
        <taxon>Mycolicibacterium</taxon>
    </lineage>
</organism>
<comment type="function">
    <text evidence="1">Cell wall formation.</text>
</comment>
<comment type="catalytic activity">
    <reaction evidence="1">
        <text>UDP-N-acetyl-alpha-D-muramate + L-alanine + ATP = UDP-N-acetyl-alpha-D-muramoyl-L-alanine + ADP + phosphate + H(+)</text>
        <dbReference type="Rhea" id="RHEA:23372"/>
        <dbReference type="ChEBI" id="CHEBI:15378"/>
        <dbReference type="ChEBI" id="CHEBI:30616"/>
        <dbReference type="ChEBI" id="CHEBI:43474"/>
        <dbReference type="ChEBI" id="CHEBI:57972"/>
        <dbReference type="ChEBI" id="CHEBI:70757"/>
        <dbReference type="ChEBI" id="CHEBI:83898"/>
        <dbReference type="ChEBI" id="CHEBI:456216"/>
        <dbReference type="EC" id="6.3.2.8"/>
    </reaction>
</comment>
<comment type="pathway">
    <text evidence="1">Cell wall biogenesis; peptidoglycan biosynthesis.</text>
</comment>
<comment type="subcellular location">
    <subcellularLocation>
        <location evidence="1">Cytoplasm</location>
    </subcellularLocation>
</comment>
<comment type="similarity">
    <text evidence="1">Belongs to the MurCDEF family.</text>
</comment>
<protein>
    <recommendedName>
        <fullName evidence="1">UDP-N-acetylmuramate--L-alanine ligase</fullName>
        <ecNumber evidence="1">6.3.2.8</ecNumber>
    </recommendedName>
    <alternativeName>
        <fullName evidence="1">UDP-N-acetylmuramoyl-L-alanine synthetase</fullName>
    </alternativeName>
</protein>
<gene>
    <name evidence="1" type="primary">murC</name>
    <name type="ordered locus">Mflv_2989</name>
</gene>
<proteinExistence type="inferred from homology"/>